<proteinExistence type="inferred from homology"/>
<gene>
    <name type="primary">rps18</name>
</gene>
<name>RR18_CHLRE</name>
<accession>O20032</accession>
<accession>B7U1H7</accession>
<sequence length="137" mass="16275">MRGLKSNKPKPRIQKVSVRKFRRKVLSLSQILSRLRQKRNQKIEQQKRNKPIKPLIPPKTLVIVLKEKPEKTLYNRRYIDYKHSGLLQRYIGLGGKILPRRQTRLTAKQQRFVAKTIKTARVMGLLPFVSKERSFFK</sequence>
<keyword id="KW-0150">Chloroplast</keyword>
<keyword id="KW-0934">Plastid</keyword>
<keyword id="KW-1185">Reference proteome</keyword>
<keyword id="KW-0687">Ribonucleoprotein</keyword>
<keyword id="KW-0689">Ribosomal protein</keyword>
<keyword id="KW-0694">RNA-binding</keyword>
<keyword id="KW-0699">rRNA-binding</keyword>
<dbReference type="EMBL" id="Y13655">
    <property type="protein sequence ID" value="CAA74009.1"/>
    <property type="molecule type" value="Genomic_DNA"/>
</dbReference>
<dbReference type="EMBL" id="FJ423446">
    <property type="protein sequence ID" value="ACJ50124.1"/>
    <property type="molecule type" value="Genomic_DNA"/>
</dbReference>
<dbReference type="EMBL" id="Y16473">
    <property type="protein sequence ID" value="CAA76244.1"/>
    <property type="molecule type" value="Genomic_DNA"/>
</dbReference>
<dbReference type="EMBL" id="BK000554">
    <property type="protein sequence ID" value="DAA00937.1"/>
    <property type="molecule type" value="Genomic_DNA"/>
</dbReference>
<dbReference type="PIR" id="T07992">
    <property type="entry name" value="T07992"/>
</dbReference>
<dbReference type="PIR" id="T07997">
    <property type="entry name" value="T07997"/>
</dbReference>
<dbReference type="RefSeq" id="NP_958392.1">
    <property type="nucleotide sequence ID" value="NC_005353.1"/>
</dbReference>
<dbReference type="SMR" id="O20032"/>
<dbReference type="STRING" id="3055.O20032"/>
<dbReference type="PaxDb" id="3055-DAA00937"/>
<dbReference type="GeneID" id="2717007"/>
<dbReference type="KEGG" id="cre:ChreCp036"/>
<dbReference type="eggNOG" id="KOG3162">
    <property type="taxonomic scope" value="Eukaryota"/>
</dbReference>
<dbReference type="HOGENOM" id="CLU_1868030_0_0_1"/>
<dbReference type="InParanoid" id="O20032"/>
<dbReference type="Proteomes" id="UP000006906">
    <property type="component" value="Chloroplast"/>
</dbReference>
<dbReference type="GO" id="GO:0009507">
    <property type="term" value="C:chloroplast"/>
    <property type="evidence" value="ECO:0007669"/>
    <property type="project" value="UniProtKB-SubCell"/>
</dbReference>
<dbReference type="GO" id="GO:0005763">
    <property type="term" value="C:mitochondrial small ribosomal subunit"/>
    <property type="evidence" value="ECO:0000318"/>
    <property type="project" value="GO_Central"/>
</dbReference>
<dbReference type="GO" id="GO:0070181">
    <property type="term" value="F:small ribosomal subunit rRNA binding"/>
    <property type="evidence" value="ECO:0000318"/>
    <property type="project" value="GO_Central"/>
</dbReference>
<dbReference type="GO" id="GO:0003735">
    <property type="term" value="F:structural constituent of ribosome"/>
    <property type="evidence" value="ECO:0000318"/>
    <property type="project" value="GO_Central"/>
</dbReference>
<dbReference type="GO" id="GO:0006412">
    <property type="term" value="P:translation"/>
    <property type="evidence" value="ECO:0000318"/>
    <property type="project" value="GO_Central"/>
</dbReference>
<dbReference type="FunFam" id="4.10.640.10:FF:000017">
    <property type="entry name" value="Related to 30s ribosomal protein s18"/>
    <property type="match status" value="1"/>
</dbReference>
<dbReference type="Gene3D" id="4.10.640.10">
    <property type="entry name" value="Ribosomal protein S18"/>
    <property type="match status" value="1"/>
</dbReference>
<dbReference type="HAMAP" id="MF_00270">
    <property type="entry name" value="Ribosomal_bS18"/>
    <property type="match status" value="1"/>
</dbReference>
<dbReference type="InterPro" id="IPR001648">
    <property type="entry name" value="Ribosomal_bS18"/>
</dbReference>
<dbReference type="InterPro" id="IPR036870">
    <property type="entry name" value="Ribosomal_bS18_sf"/>
</dbReference>
<dbReference type="NCBIfam" id="TIGR00165">
    <property type="entry name" value="S18"/>
    <property type="match status" value="1"/>
</dbReference>
<dbReference type="PANTHER" id="PTHR13479">
    <property type="entry name" value="30S RIBOSOMAL PROTEIN S18"/>
    <property type="match status" value="1"/>
</dbReference>
<dbReference type="PANTHER" id="PTHR13479:SF40">
    <property type="entry name" value="SMALL RIBOSOMAL SUBUNIT PROTEIN BS18M"/>
    <property type="match status" value="1"/>
</dbReference>
<dbReference type="Pfam" id="PF01084">
    <property type="entry name" value="Ribosomal_S18"/>
    <property type="match status" value="1"/>
</dbReference>
<dbReference type="PRINTS" id="PR00974">
    <property type="entry name" value="RIBOSOMALS18"/>
</dbReference>
<dbReference type="SUPFAM" id="SSF46911">
    <property type="entry name" value="Ribosomal protein S18"/>
    <property type="match status" value="1"/>
</dbReference>
<geneLocation type="chloroplast"/>
<evidence type="ECO:0000305" key="1"/>
<protein>
    <recommendedName>
        <fullName evidence="1">Small ribosomal subunit protein bS18c</fullName>
    </recommendedName>
    <alternativeName>
        <fullName>30S ribosomal protein S18, chloroplastic</fullName>
    </alternativeName>
</protein>
<feature type="chain" id="PRO_0000111280" description="Small ribosomal subunit protein bS18c">
    <location>
        <begin position="1"/>
        <end position="137"/>
    </location>
</feature>
<comment type="subunit">
    <text>Part of the 30S ribosomal subunit.</text>
</comment>
<comment type="subcellular location">
    <subcellularLocation>
        <location>Plastid</location>
        <location>Chloroplast</location>
    </subcellularLocation>
</comment>
<comment type="similarity">
    <text evidence="1">Belongs to the bacterial ribosomal protein bS18 family.</text>
</comment>
<organism>
    <name type="scientific">Chlamydomonas reinhardtii</name>
    <name type="common">Chlamydomonas smithii</name>
    <dbReference type="NCBI Taxonomy" id="3055"/>
    <lineage>
        <taxon>Eukaryota</taxon>
        <taxon>Viridiplantae</taxon>
        <taxon>Chlorophyta</taxon>
        <taxon>core chlorophytes</taxon>
        <taxon>Chlorophyceae</taxon>
        <taxon>CS clade</taxon>
        <taxon>Chlamydomonadales</taxon>
        <taxon>Chlamydomonadaceae</taxon>
        <taxon>Chlamydomonas</taxon>
    </lineage>
</organism>
<reference key="1">
    <citation type="journal article" date="1997" name="EMBO J.">
        <title>The chloroplast ycf3 and ycf4 open reading frames of Chlamydomonas reinhardtii are required for the accumulation of the photosystem I complex.</title>
        <authorList>
            <person name="Boudreau E."/>
            <person name="Takahashi Y."/>
            <person name="Lemieux C."/>
            <person name="Turmel M."/>
            <person name="Rochaix J.-D."/>
        </authorList>
    </citation>
    <scope>NUCLEOTIDE SEQUENCE [GENOMIC DNA]</scope>
</reference>
<reference key="2">
    <citation type="journal article" date="2009" name="BMC Evol. Biol.">
        <title>Nucleotide diversity of the Chlamydomonas reinhardtii plastid genome: addressing the mutational-hazard hypothesis.</title>
        <authorList>
            <person name="Smith D.R."/>
            <person name="Lee R.W."/>
        </authorList>
    </citation>
    <scope>NUCLEOTIDE SEQUENCE [LARGE SCALE GENOMIC DNA]</scope>
    <source>
        <strain>CC-503</strain>
    </source>
</reference>
<reference key="3">
    <citation type="journal article" date="1998" name="Biochim. Biophys. Acta">
        <title>Extraordinary features in the Chlamydomonas reinhardtii chloroplast genome: (1) rps2 as part of a large open reading frame; (2) a C. reinhardtii specific repeat sequence.</title>
        <authorList>
            <person name="Leu S."/>
        </authorList>
    </citation>
    <scope>NUCLEOTIDE SEQUENCE [GENOMIC DNA] OF 13-137</scope>
</reference>
<reference key="4">
    <citation type="journal article" date="2002" name="Plant Cell">
        <title>The Chlamydomonas reinhardtii plastid chromosome: islands of genes in a sea of repeats.</title>
        <authorList>
            <person name="Maul J.E."/>
            <person name="Lilly J.W."/>
            <person name="Cui L."/>
            <person name="dePamphilis C.W."/>
            <person name="Miller W."/>
            <person name="Harris E.H."/>
            <person name="Stern D.B."/>
        </authorList>
    </citation>
    <scope>IDENTIFICATION</scope>
    <scope>COMPLETE PLASTID GENOME</scope>
</reference>